<dbReference type="EC" id="3.1.11.6" evidence="1"/>
<dbReference type="EMBL" id="BX936398">
    <property type="protein sequence ID" value="CAH20181.1"/>
    <property type="molecule type" value="Genomic_DNA"/>
</dbReference>
<dbReference type="RefSeq" id="WP_002208660.1">
    <property type="nucleotide sequence ID" value="NZ_CP009712.1"/>
</dbReference>
<dbReference type="SMR" id="Q66DV2"/>
<dbReference type="GeneID" id="57975538"/>
<dbReference type="KEGG" id="ypo:BZ17_1605"/>
<dbReference type="KEGG" id="yps:YPTB0941"/>
<dbReference type="PATRIC" id="fig|273123.14.peg.1703"/>
<dbReference type="Proteomes" id="UP000001011">
    <property type="component" value="Chromosome"/>
</dbReference>
<dbReference type="GO" id="GO:0005829">
    <property type="term" value="C:cytosol"/>
    <property type="evidence" value="ECO:0007669"/>
    <property type="project" value="TreeGrafter"/>
</dbReference>
<dbReference type="GO" id="GO:0009318">
    <property type="term" value="C:exodeoxyribonuclease VII complex"/>
    <property type="evidence" value="ECO:0007669"/>
    <property type="project" value="InterPro"/>
</dbReference>
<dbReference type="GO" id="GO:0008855">
    <property type="term" value="F:exodeoxyribonuclease VII activity"/>
    <property type="evidence" value="ECO:0007669"/>
    <property type="project" value="UniProtKB-UniRule"/>
</dbReference>
<dbReference type="GO" id="GO:0006308">
    <property type="term" value="P:DNA catabolic process"/>
    <property type="evidence" value="ECO:0007669"/>
    <property type="project" value="UniProtKB-UniRule"/>
</dbReference>
<dbReference type="FunFam" id="1.10.287.1040:FF:000001">
    <property type="entry name" value="Exodeoxyribonuclease 7 small subunit"/>
    <property type="match status" value="1"/>
</dbReference>
<dbReference type="Gene3D" id="1.10.287.1040">
    <property type="entry name" value="Exonuclease VII, small subunit"/>
    <property type="match status" value="1"/>
</dbReference>
<dbReference type="HAMAP" id="MF_00337">
    <property type="entry name" value="Exonuc_7_S"/>
    <property type="match status" value="1"/>
</dbReference>
<dbReference type="InterPro" id="IPR003761">
    <property type="entry name" value="Exonuc_VII_S"/>
</dbReference>
<dbReference type="InterPro" id="IPR037004">
    <property type="entry name" value="Exonuc_VII_ssu_sf"/>
</dbReference>
<dbReference type="NCBIfam" id="NF002137">
    <property type="entry name" value="PRK00977.1-1"/>
    <property type="match status" value="1"/>
</dbReference>
<dbReference type="NCBIfam" id="NF002140">
    <property type="entry name" value="PRK00977.1-4"/>
    <property type="match status" value="1"/>
</dbReference>
<dbReference type="NCBIfam" id="TIGR01280">
    <property type="entry name" value="xseB"/>
    <property type="match status" value="1"/>
</dbReference>
<dbReference type="PANTHER" id="PTHR34137">
    <property type="entry name" value="EXODEOXYRIBONUCLEASE 7 SMALL SUBUNIT"/>
    <property type="match status" value="1"/>
</dbReference>
<dbReference type="PANTHER" id="PTHR34137:SF1">
    <property type="entry name" value="EXODEOXYRIBONUCLEASE 7 SMALL SUBUNIT"/>
    <property type="match status" value="1"/>
</dbReference>
<dbReference type="Pfam" id="PF02609">
    <property type="entry name" value="Exonuc_VII_S"/>
    <property type="match status" value="1"/>
</dbReference>
<dbReference type="PIRSF" id="PIRSF006488">
    <property type="entry name" value="Exonuc_VII_S"/>
    <property type="match status" value="1"/>
</dbReference>
<dbReference type="SUPFAM" id="SSF116842">
    <property type="entry name" value="XseB-like"/>
    <property type="match status" value="1"/>
</dbReference>
<protein>
    <recommendedName>
        <fullName evidence="1">Exodeoxyribonuclease 7 small subunit</fullName>
        <ecNumber evidence="1">3.1.11.6</ecNumber>
    </recommendedName>
    <alternativeName>
        <fullName evidence="1">Exodeoxyribonuclease VII small subunit</fullName>
        <shortName evidence="1">Exonuclease VII small subunit</shortName>
    </alternativeName>
</protein>
<sequence length="84" mass="9307">MPKKAASPEIKAASFETSLSELEQIVTRLESGELPLEDALNEFERGVQLARQGQQTLLQAEQRVQILLSDDVDAPLKPFTPDTE</sequence>
<reference key="1">
    <citation type="journal article" date="2004" name="Proc. Natl. Acad. Sci. U.S.A.">
        <title>Insights into the evolution of Yersinia pestis through whole-genome comparison with Yersinia pseudotuberculosis.</title>
        <authorList>
            <person name="Chain P.S.G."/>
            <person name="Carniel E."/>
            <person name="Larimer F.W."/>
            <person name="Lamerdin J."/>
            <person name="Stoutland P.O."/>
            <person name="Regala W.M."/>
            <person name="Georgescu A.M."/>
            <person name="Vergez L.M."/>
            <person name="Land M.L."/>
            <person name="Motin V.L."/>
            <person name="Brubaker R.R."/>
            <person name="Fowler J."/>
            <person name="Hinnebusch J."/>
            <person name="Marceau M."/>
            <person name="Medigue C."/>
            <person name="Simonet M."/>
            <person name="Chenal-Francisque V."/>
            <person name="Souza B."/>
            <person name="Dacheux D."/>
            <person name="Elliott J.M."/>
            <person name="Derbise A."/>
            <person name="Hauser L.J."/>
            <person name="Garcia E."/>
        </authorList>
    </citation>
    <scope>NUCLEOTIDE SEQUENCE [LARGE SCALE GENOMIC DNA]</scope>
    <source>
        <strain>IP32953</strain>
    </source>
</reference>
<proteinExistence type="inferred from homology"/>
<feature type="chain" id="PRO_0000207039" description="Exodeoxyribonuclease 7 small subunit">
    <location>
        <begin position="1"/>
        <end position="84"/>
    </location>
</feature>
<comment type="function">
    <text evidence="1">Bidirectionally degrades single-stranded DNA into large acid-insoluble oligonucleotides, which are then degraded further into small acid-soluble oligonucleotides.</text>
</comment>
<comment type="catalytic activity">
    <reaction evidence="1">
        <text>Exonucleolytic cleavage in either 5'- to 3'- or 3'- to 5'-direction to yield nucleoside 5'-phosphates.</text>
        <dbReference type="EC" id="3.1.11.6"/>
    </reaction>
</comment>
<comment type="subunit">
    <text evidence="1">Heterooligomer composed of large and small subunits.</text>
</comment>
<comment type="subcellular location">
    <subcellularLocation>
        <location evidence="1">Cytoplasm</location>
    </subcellularLocation>
</comment>
<comment type="similarity">
    <text evidence="1">Belongs to the XseB family.</text>
</comment>
<evidence type="ECO:0000255" key="1">
    <source>
        <dbReference type="HAMAP-Rule" id="MF_00337"/>
    </source>
</evidence>
<organism>
    <name type="scientific">Yersinia pseudotuberculosis serotype I (strain IP32953)</name>
    <dbReference type="NCBI Taxonomy" id="273123"/>
    <lineage>
        <taxon>Bacteria</taxon>
        <taxon>Pseudomonadati</taxon>
        <taxon>Pseudomonadota</taxon>
        <taxon>Gammaproteobacteria</taxon>
        <taxon>Enterobacterales</taxon>
        <taxon>Yersiniaceae</taxon>
        <taxon>Yersinia</taxon>
    </lineage>
</organism>
<gene>
    <name evidence="1" type="primary">xseB</name>
    <name type="ordered locus">YPTB0941</name>
</gene>
<name>EX7S_YERPS</name>
<keyword id="KW-0963">Cytoplasm</keyword>
<keyword id="KW-0269">Exonuclease</keyword>
<keyword id="KW-0378">Hydrolase</keyword>
<keyword id="KW-0540">Nuclease</keyword>
<accession>Q66DV2</accession>